<gene>
    <name type="primary">relB4</name>
    <name type="ordered locus">MJ1172</name>
</gene>
<accession>Q58572</accession>
<feature type="chain" id="PRO_0000107199" description="Putative antitoxin RelB4">
    <location>
        <begin position="1"/>
        <end position="84"/>
    </location>
</feature>
<name>RELB4_METJA</name>
<keyword id="KW-1185">Reference proteome</keyword>
<keyword id="KW-1277">Toxin-antitoxin system</keyword>
<organism>
    <name type="scientific">Methanocaldococcus jannaschii (strain ATCC 43067 / DSM 2661 / JAL-1 / JCM 10045 / NBRC 100440)</name>
    <name type="common">Methanococcus jannaschii</name>
    <dbReference type="NCBI Taxonomy" id="243232"/>
    <lineage>
        <taxon>Archaea</taxon>
        <taxon>Methanobacteriati</taxon>
        <taxon>Methanobacteriota</taxon>
        <taxon>Methanomada group</taxon>
        <taxon>Methanococci</taxon>
        <taxon>Methanococcales</taxon>
        <taxon>Methanocaldococcaceae</taxon>
        <taxon>Methanocaldococcus</taxon>
    </lineage>
</organism>
<proteinExistence type="predicted"/>
<evidence type="ECO:0000305" key="1"/>
<sequence length="84" mass="9986">MILMVKAIVDITDENNRIINIVKAKYNLRDKSQAINKIIEEYAEFLLEDELKPEYIEKIRNIMKNEKPIYIGSIENLKKRYLGE</sequence>
<dbReference type="EMBL" id="L77117">
    <property type="protein sequence ID" value="AAB99187.1"/>
    <property type="molecule type" value="Genomic_DNA"/>
</dbReference>
<dbReference type="PIR" id="C64446">
    <property type="entry name" value="C64446"/>
</dbReference>
<dbReference type="SMR" id="Q58572"/>
<dbReference type="STRING" id="243232.MJ_1172"/>
<dbReference type="PaxDb" id="243232-MJ_1172"/>
<dbReference type="EnsemblBacteria" id="AAB99187">
    <property type="protein sequence ID" value="AAB99187"/>
    <property type="gene ID" value="MJ_1172"/>
</dbReference>
<dbReference type="KEGG" id="mja:MJ_1172"/>
<dbReference type="eggNOG" id="arCOG05071">
    <property type="taxonomic scope" value="Archaea"/>
</dbReference>
<dbReference type="HOGENOM" id="CLU_189630_0_0_2"/>
<dbReference type="InParanoid" id="Q58572"/>
<dbReference type="PhylomeDB" id="Q58572"/>
<dbReference type="Proteomes" id="UP000000805">
    <property type="component" value="Chromosome"/>
</dbReference>
<dbReference type="InterPro" id="IPR020271">
    <property type="entry name" value="Uncharacterised_MJ1172"/>
</dbReference>
<dbReference type="Pfam" id="PF10884">
    <property type="entry name" value="DUF2683"/>
    <property type="match status" value="1"/>
</dbReference>
<protein>
    <recommendedName>
        <fullName>Putative antitoxin RelB4</fullName>
    </recommendedName>
</protein>
<reference key="1">
    <citation type="journal article" date="1996" name="Science">
        <title>Complete genome sequence of the methanogenic archaeon, Methanococcus jannaschii.</title>
        <authorList>
            <person name="Bult C.J."/>
            <person name="White O."/>
            <person name="Olsen G.J."/>
            <person name="Zhou L."/>
            <person name="Fleischmann R.D."/>
            <person name="Sutton G.G."/>
            <person name="Blake J.A."/>
            <person name="FitzGerald L.M."/>
            <person name="Clayton R.A."/>
            <person name="Gocayne J.D."/>
            <person name="Kerlavage A.R."/>
            <person name="Dougherty B.A."/>
            <person name="Tomb J.-F."/>
            <person name="Adams M.D."/>
            <person name="Reich C.I."/>
            <person name="Overbeek R."/>
            <person name="Kirkness E.F."/>
            <person name="Weinstock K.G."/>
            <person name="Merrick J.M."/>
            <person name="Glodek A."/>
            <person name="Scott J.L."/>
            <person name="Geoghagen N.S.M."/>
            <person name="Weidman J.F."/>
            <person name="Fuhrmann J.L."/>
            <person name="Nguyen D."/>
            <person name="Utterback T.R."/>
            <person name="Kelley J.M."/>
            <person name="Peterson J.D."/>
            <person name="Sadow P.W."/>
            <person name="Hanna M.C."/>
            <person name="Cotton M.D."/>
            <person name="Roberts K.M."/>
            <person name="Hurst M.A."/>
            <person name="Kaine B.P."/>
            <person name="Borodovsky M."/>
            <person name="Klenk H.-P."/>
            <person name="Fraser C.M."/>
            <person name="Smith H.O."/>
            <person name="Woese C.R."/>
            <person name="Venter J.C."/>
        </authorList>
    </citation>
    <scope>NUCLEOTIDE SEQUENCE [LARGE SCALE GENOMIC DNA]</scope>
    <source>
        <strain>ATCC 43067 / DSM 2661 / JAL-1 / JCM 10045 / NBRC 100440</strain>
    </source>
</reference>
<reference key="2">
    <citation type="journal article" date="2005" name="Nucleic Acids Res.">
        <title>Toxin-antitoxin loci are highly abundant in free-living but lost from host-associated prokaryotes.</title>
        <authorList>
            <person name="Pandey D.P."/>
            <person name="Gerdes K."/>
        </authorList>
    </citation>
    <scope>POSSIBLE FUNCTION</scope>
    <source>
        <strain>ATCC 43067 / DSM 2661 / JAL-1 / JCM 10045 / NBRC 100440</strain>
    </source>
</reference>
<comment type="function">
    <text evidence="1">Antitoxin component of a type II toxin-antitoxin (TA) system. Its cognate toxin is RelE4 (Potential).</text>
</comment>